<protein>
    <recommendedName>
        <fullName>Prohibitin-1</fullName>
    </recommendedName>
</protein>
<accession>Q9P7H3</accession>
<dbReference type="EMBL" id="CU329670">
    <property type="protein sequence ID" value="CAB76268.1"/>
    <property type="molecule type" value="Genomic_DNA"/>
</dbReference>
<dbReference type="PIR" id="T50096">
    <property type="entry name" value="T50096"/>
</dbReference>
<dbReference type="RefSeq" id="NP_594713.1">
    <property type="nucleotide sequence ID" value="NM_001020140.2"/>
</dbReference>
<dbReference type="SMR" id="Q9P7H3"/>
<dbReference type="BioGRID" id="278819">
    <property type="interactions" value="2"/>
</dbReference>
<dbReference type="FunCoup" id="Q9P7H3">
    <property type="interactions" value="628"/>
</dbReference>
<dbReference type="STRING" id="284812.Q9P7H3"/>
<dbReference type="PaxDb" id="4896-SPAC1782.06c.1"/>
<dbReference type="EnsemblFungi" id="SPAC1782.06c.1">
    <property type="protein sequence ID" value="SPAC1782.06c.1:pep"/>
    <property type="gene ID" value="SPAC1782.06c"/>
</dbReference>
<dbReference type="GeneID" id="2542354"/>
<dbReference type="KEGG" id="spo:2542354"/>
<dbReference type="PomBase" id="SPAC1782.06c">
    <property type="gene designation" value="phb1"/>
</dbReference>
<dbReference type="VEuPathDB" id="FungiDB:SPAC1782.06c"/>
<dbReference type="eggNOG" id="KOG3083">
    <property type="taxonomic scope" value="Eukaryota"/>
</dbReference>
<dbReference type="HOGENOM" id="CLU_047969_0_2_1"/>
<dbReference type="InParanoid" id="Q9P7H3"/>
<dbReference type="OMA" id="YEFRLVT"/>
<dbReference type="PhylomeDB" id="Q9P7H3"/>
<dbReference type="PRO" id="PR:Q9P7H3"/>
<dbReference type="Proteomes" id="UP000002485">
    <property type="component" value="Chromosome I"/>
</dbReference>
<dbReference type="GO" id="GO:0005737">
    <property type="term" value="C:cytoplasm"/>
    <property type="evidence" value="ECO:0007005"/>
    <property type="project" value="PomBase"/>
</dbReference>
<dbReference type="GO" id="GO:0005743">
    <property type="term" value="C:mitochondrial inner membrane"/>
    <property type="evidence" value="ECO:0000266"/>
    <property type="project" value="PomBase"/>
</dbReference>
<dbReference type="GO" id="GO:0005739">
    <property type="term" value="C:mitochondrion"/>
    <property type="evidence" value="ECO:0000318"/>
    <property type="project" value="GO_Central"/>
</dbReference>
<dbReference type="GO" id="GO:0140580">
    <property type="term" value="F:mitochondrion autophagosome adaptor activity"/>
    <property type="evidence" value="ECO:0000304"/>
    <property type="project" value="PomBase"/>
</dbReference>
<dbReference type="GO" id="GO:0007005">
    <property type="term" value="P:mitochondrion organization"/>
    <property type="evidence" value="ECO:0000318"/>
    <property type="project" value="GO_Central"/>
</dbReference>
<dbReference type="GO" id="GO:0000423">
    <property type="term" value="P:mitophagy"/>
    <property type="evidence" value="ECO:0000304"/>
    <property type="project" value="PomBase"/>
</dbReference>
<dbReference type="CDD" id="cd03401">
    <property type="entry name" value="SPFH_prohibitin"/>
    <property type="match status" value="1"/>
</dbReference>
<dbReference type="FunFam" id="3.30.479.30:FF:000001">
    <property type="entry name" value="Prohibitin 2"/>
    <property type="match status" value="1"/>
</dbReference>
<dbReference type="Gene3D" id="3.30.479.30">
    <property type="entry name" value="Band 7 domain"/>
    <property type="match status" value="1"/>
</dbReference>
<dbReference type="InterPro" id="IPR001107">
    <property type="entry name" value="Band_7"/>
</dbReference>
<dbReference type="InterPro" id="IPR036013">
    <property type="entry name" value="Band_7/SPFH_dom_sf"/>
</dbReference>
<dbReference type="InterPro" id="IPR000163">
    <property type="entry name" value="Prohibitin"/>
</dbReference>
<dbReference type="PANTHER" id="PTHR23222">
    <property type="entry name" value="PROHIBITIN"/>
    <property type="match status" value="1"/>
</dbReference>
<dbReference type="PANTHER" id="PTHR23222:SF0">
    <property type="entry name" value="PROHIBITIN 1"/>
    <property type="match status" value="1"/>
</dbReference>
<dbReference type="Pfam" id="PF01145">
    <property type="entry name" value="Band_7"/>
    <property type="match status" value="1"/>
</dbReference>
<dbReference type="PRINTS" id="PR00679">
    <property type="entry name" value="PROHIBITIN"/>
</dbReference>
<dbReference type="SMART" id="SM00244">
    <property type="entry name" value="PHB"/>
    <property type="match status" value="1"/>
</dbReference>
<dbReference type="SUPFAM" id="SSF117892">
    <property type="entry name" value="Band 7/SPFH domain"/>
    <property type="match status" value="1"/>
</dbReference>
<organism>
    <name type="scientific">Schizosaccharomyces pombe (strain 972 / ATCC 24843)</name>
    <name type="common">Fission yeast</name>
    <dbReference type="NCBI Taxonomy" id="284812"/>
    <lineage>
        <taxon>Eukaryota</taxon>
        <taxon>Fungi</taxon>
        <taxon>Dikarya</taxon>
        <taxon>Ascomycota</taxon>
        <taxon>Taphrinomycotina</taxon>
        <taxon>Schizosaccharomycetes</taxon>
        <taxon>Schizosaccharomycetales</taxon>
        <taxon>Schizosaccharomycetaceae</taxon>
        <taxon>Schizosaccharomyces</taxon>
    </lineage>
</organism>
<gene>
    <name type="primary">phb1</name>
    <name type="ORF">SPAC1782.06c</name>
</gene>
<name>PHB1_SCHPO</name>
<proteinExistence type="inferred from homology"/>
<comment type="function">
    <text evidence="1">Prohibitin probably acts as a holdase/unfoldase for the stabilization of newly synthesized mitochondrial proteins. Involved in mitophagy; may act as an adapter for atg8 that supports mitophagosome assembly. Negatively regulates the proteolytic processing of atg32 via the i-AAA protease. Acts as a negative regulator of the m-AAA protease.</text>
</comment>
<comment type="subunit">
    <text evidence="1">The mitochondrial prohibitin complex consists of two subunits (phb1 and phb2). The subunits assemble into a membrane-associated ring-shaped supercomplex of approximately 1 mDa.</text>
</comment>
<comment type="subcellular location">
    <subcellularLocation>
        <location evidence="1">Mitochondrion inner membrane</location>
        <topology evidence="1">Peripheral membrane protein</topology>
        <orientation evidence="1">Intermembrane side</orientation>
    </subcellularLocation>
    <subcellularLocation>
        <location evidence="3">Cytoplasm</location>
    </subcellularLocation>
</comment>
<comment type="similarity">
    <text evidence="2">Belongs to the prohibitin family.</text>
</comment>
<feature type="chain" id="PRO_0000316248" description="Prohibitin-1">
    <location>
        <begin position="1"/>
        <end position="282"/>
    </location>
</feature>
<feature type="short sequence motif" description="AIM" evidence="1">
    <location>
        <begin position="106"/>
        <end position="109"/>
    </location>
</feature>
<evidence type="ECO:0000250" key="1">
    <source>
        <dbReference type="UniProtKB" id="P40961"/>
    </source>
</evidence>
<evidence type="ECO:0000305" key="2"/>
<evidence type="ECO:0000305" key="3">
    <source>
    </source>
</evidence>
<keyword id="KW-0963">Cytoplasm</keyword>
<keyword id="KW-0472">Membrane</keyword>
<keyword id="KW-0496">Mitochondrion</keyword>
<keyword id="KW-0999">Mitochondrion inner membrane</keyword>
<keyword id="KW-1185">Reference proteome</keyword>
<sequence>MAVVLERVARYAIPIGIGFTLLQSSIYDVPGGKRAVLFDRLSGVQKQVVQEGTHFLIPWLQKAIVYDVRTRPRNIATTTGSKDLQMVSLTLRVLHRPEVGMLPQIYQNLGLDYDERVLPSIGNEILKSVVAQFDAAELITQREVVSAKIRQELVQRATEFGIRLEDVSITHMTFGKEFTKAVERKQIAQQEAERARFLVEQSEQERQANVIRAEGEAEAADIVSKALDKAGGALIQIRRLETSKEVATALANKGAQVTYLPFGAGSNAQSSSGSGLLLNVNP</sequence>
<reference key="1">
    <citation type="journal article" date="2002" name="Nature">
        <title>The genome sequence of Schizosaccharomyces pombe.</title>
        <authorList>
            <person name="Wood V."/>
            <person name="Gwilliam R."/>
            <person name="Rajandream M.A."/>
            <person name="Lyne M.H."/>
            <person name="Lyne R."/>
            <person name="Stewart A."/>
            <person name="Sgouros J.G."/>
            <person name="Peat N."/>
            <person name="Hayles J."/>
            <person name="Baker S.G."/>
            <person name="Basham D."/>
            <person name="Bowman S."/>
            <person name="Brooks K."/>
            <person name="Brown D."/>
            <person name="Brown S."/>
            <person name="Chillingworth T."/>
            <person name="Churcher C.M."/>
            <person name="Collins M."/>
            <person name="Connor R."/>
            <person name="Cronin A."/>
            <person name="Davis P."/>
            <person name="Feltwell T."/>
            <person name="Fraser A."/>
            <person name="Gentles S."/>
            <person name="Goble A."/>
            <person name="Hamlin N."/>
            <person name="Harris D.E."/>
            <person name="Hidalgo J."/>
            <person name="Hodgson G."/>
            <person name="Holroyd S."/>
            <person name="Hornsby T."/>
            <person name="Howarth S."/>
            <person name="Huckle E.J."/>
            <person name="Hunt S."/>
            <person name="Jagels K."/>
            <person name="James K.D."/>
            <person name="Jones L."/>
            <person name="Jones M."/>
            <person name="Leather S."/>
            <person name="McDonald S."/>
            <person name="McLean J."/>
            <person name="Mooney P."/>
            <person name="Moule S."/>
            <person name="Mungall K.L."/>
            <person name="Murphy L.D."/>
            <person name="Niblett D."/>
            <person name="Odell C."/>
            <person name="Oliver K."/>
            <person name="O'Neil S."/>
            <person name="Pearson D."/>
            <person name="Quail M.A."/>
            <person name="Rabbinowitsch E."/>
            <person name="Rutherford K.M."/>
            <person name="Rutter S."/>
            <person name="Saunders D."/>
            <person name="Seeger K."/>
            <person name="Sharp S."/>
            <person name="Skelton J."/>
            <person name="Simmonds M.N."/>
            <person name="Squares R."/>
            <person name="Squares S."/>
            <person name="Stevens K."/>
            <person name="Taylor K."/>
            <person name="Taylor R.G."/>
            <person name="Tivey A."/>
            <person name="Walsh S.V."/>
            <person name="Warren T."/>
            <person name="Whitehead S."/>
            <person name="Woodward J.R."/>
            <person name="Volckaert G."/>
            <person name="Aert R."/>
            <person name="Robben J."/>
            <person name="Grymonprez B."/>
            <person name="Weltjens I."/>
            <person name="Vanstreels E."/>
            <person name="Rieger M."/>
            <person name="Schaefer M."/>
            <person name="Mueller-Auer S."/>
            <person name="Gabel C."/>
            <person name="Fuchs M."/>
            <person name="Duesterhoeft A."/>
            <person name="Fritzc C."/>
            <person name="Holzer E."/>
            <person name="Moestl D."/>
            <person name="Hilbert H."/>
            <person name="Borzym K."/>
            <person name="Langer I."/>
            <person name="Beck A."/>
            <person name="Lehrach H."/>
            <person name="Reinhardt R."/>
            <person name="Pohl T.M."/>
            <person name="Eger P."/>
            <person name="Zimmermann W."/>
            <person name="Wedler H."/>
            <person name="Wambutt R."/>
            <person name="Purnelle B."/>
            <person name="Goffeau A."/>
            <person name="Cadieu E."/>
            <person name="Dreano S."/>
            <person name="Gloux S."/>
            <person name="Lelaure V."/>
            <person name="Mottier S."/>
            <person name="Galibert F."/>
            <person name="Aves S.J."/>
            <person name="Xiang Z."/>
            <person name="Hunt C."/>
            <person name="Moore K."/>
            <person name="Hurst S.M."/>
            <person name="Lucas M."/>
            <person name="Rochet M."/>
            <person name="Gaillardin C."/>
            <person name="Tallada V.A."/>
            <person name="Garzon A."/>
            <person name="Thode G."/>
            <person name="Daga R.R."/>
            <person name="Cruzado L."/>
            <person name="Jimenez J."/>
            <person name="Sanchez M."/>
            <person name="del Rey F."/>
            <person name="Benito J."/>
            <person name="Dominguez A."/>
            <person name="Revuelta J.L."/>
            <person name="Moreno S."/>
            <person name="Armstrong J."/>
            <person name="Forsburg S.L."/>
            <person name="Cerutti L."/>
            <person name="Lowe T."/>
            <person name="McCombie W.R."/>
            <person name="Paulsen I."/>
            <person name="Potashkin J."/>
            <person name="Shpakovski G.V."/>
            <person name="Ussery D."/>
            <person name="Barrell B.G."/>
            <person name="Nurse P."/>
        </authorList>
    </citation>
    <scope>NUCLEOTIDE SEQUENCE [LARGE SCALE GENOMIC DNA]</scope>
    <source>
        <strain>972 / ATCC 24843</strain>
    </source>
</reference>
<reference key="2">
    <citation type="journal article" date="2006" name="Nat. Biotechnol.">
        <title>ORFeome cloning and global analysis of protein localization in the fission yeast Schizosaccharomyces pombe.</title>
        <authorList>
            <person name="Matsuyama A."/>
            <person name="Arai R."/>
            <person name="Yashiroda Y."/>
            <person name="Shirai A."/>
            <person name="Kamata A."/>
            <person name="Sekido S."/>
            <person name="Kobayashi Y."/>
            <person name="Hashimoto A."/>
            <person name="Hamamoto M."/>
            <person name="Hiraoka Y."/>
            <person name="Horinouchi S."/>
            <person name="Yoshida M."/>
        </authorList>
    </citation>
    <scope>SUBCELLULAR LOCATION [LARGE SCALE ANALYSIS]</scope>
</reference>